<accession>Q666P5</accession>
<gene>
    <name evidence="1" type="primary">metK</name>
    <name type="ordered locus">YPTB3203</name>
</gene>
<sequence>MAKHLFTSESVSEGHPDKIADQISDAVLDAILEQDPKARVACETYVKTGMVLVGGEVTTNAWVDIEEITRRTIREIGYVHSDMGFDANSCAVLSAIGKQSPDINQGVDRENPLEQGAGDQGLMFGYATNETSVLMPAPITYAHRLVERQAEVRKNGALPWLRPDAKSQVTFQYDDGKIVGIDAVVLSTQHSEDINQKDLHEAVMEEIIKPVLPAEWITAHTKYFINPTGRFVIGGPMGDCGLTGRKIIVDTYGGMARHGGGAFSGKDPSKVDRSAAYAARYVAKNIVAAGLADRCEIQVSYAIGVAEPTSIMVEAFGTEKIPADQLTLLVREFFDLRPYGLIKMLDLLHPIYRETAAYGHFGREHFPWEKTDKAALLRDAAGLK</sequence>
<keyword id="KW-0067">ATP-binding</keyword>
<keyword id="KW-0963">Cytoplasm</keyword>
<keyword id="KW-0460">Magnesium</keyword>
<keyword id="KW-0479">Metal-binding</keyword>
<keyword id="KW-0547">Nucleotide-binding</keyword>
<keyword id="KW-0554">One-carbon metabolism</keyword>
<keyword id="KW-0630">Potassium</keyword>
<keyword id="KW-0808">Transferase</keyword>
<proteinExistence type="inferred from homology"/>
<evidence type="ECO:0000255" key="1">
    <source>
        <dbReference type="HAMAP-Rule" id="MF_00086"/>
    </source>
</evidence>
<comment type="function">
    <text evidence="1">Catalyzes the formation of S-adenosylmethionine (AdoMet) from methionine and ATP. The overall synthetic reaction is composed of two sequential steps, AdoMet formation and the subsequent tripolyphosphate hydrolysis which occurs prior to release of AdoMet from the enzyme.</text>
</comment>
<comment type="catalytic activity">
    <reaction evidence="1">
        <text>L-methionine + ATP + H2O = S-adenosyl-L-methionine + phosphate + diphosphate</text>
        <dbReference type="Rhea" id="RHEA:21080"/>
        <dbReference type="ChEBI" id="CHEBI:15377"/>
        <dbReference type="ChEBI" id="CHEBI:30616"/>
        <dbReference type="ChEBI" id="CHEBI:33019"/>
        <dbReference type="ChEBI" id="CHEBI:43474"/>
        <dbReference type="ChEBI" id="CHEBI:57844"/>
        <dbReference type="ChEBI" id="CHEBI:59789"/>
        <dbReference type="EC" id="2.5.1.6"/>
    </reaction>
</comment>
<comment type="cofactor">
    <cofactor evidence="1">
        <name>Mg(2+)</name>
        <dbReference type="ChEBI" id="CHEBI:18420"/>
    </cofactor>
    <text evidence="1">Binds 2 divalent ions per subunit.</text>
</comment>
<comment type="cofactor">
    <cofactor evidence="1">
        <name>K(+)</name>
        <dbReference type="ChEBI" id="CHEBI:29103"/>
    </cofactor>
    <text evidence="1">Binds 1 potassium ion per subunit.</text>
</comment>
<comment type="pathway">
    <text evidence="1">Amino-acid biosynthesis; S-adenosyl-L-methionine biosynthesis; S-adenosyl-L-methionine from L-methionine: step 1/1.</text>
</comment>
<comment type="subunit">
    <text evidence="1">Homotetramer; dimer of dimers.</text>
</comment>
<comment type="subcellular location">
    <subcellularLocation>
        <location evidence="1">Cytoplasm</location>
    </subcellularLocation>
</comment>
<comment type="similarity">
    <text evidence="1">Belongs to the AdoMet synthase family.</text>
</comment>
<feature type="chain" id="PRO_0000174631" description="S-adenosylmethionine synthase">
    <location>
        <begin position="1"/>
        <end position="384"/>
    </location>
</feature>
<feature type="region of interest" description="Flexible loop" evidence="1">
    <location>
        <begin position="99"/>
        <end position="109"/>
    </location>
</feature>
<feature type="binding site" description="in other chain" evidence="1">
    <location>
        <position position="15"/>
    </location>
    <ligand>
        <name>ATP</name>
        <dbReference type="ChEBI" id="CHEBI:30616"/>
        <note>ligand shared between two neighboring subunits</note>
    </ligand>
</feature>
<feature type="binding site" evidence="1">
    <location>
        <position position="17"/>
    </location>
    <ligand>
        <name>Mg(2+)</name>
        <dbReference type="ChEBI" id="CHEBI:18420"/>
    </ligand>
</feature>
<feature type="binding site" evidence="1">
    <location>
        <position position="43"/>
    </location>
    <ligand>
        <name>K(+)</name>
        <dbReference type="ChEBI" id="CHEBI:29103"/>
    </ligand>
</feature>
<feature type="binding site" description="in other chain" evidence="1">
    <location>
        <position position="56"/>
    </location>
    <ligand>
        <name>L-methionine</name>
        <dbReference type="ChEBI" id="CHEBI:57844"/>
        <note>ligand shared between two neighboring subunits</note>
    </ligand>
</feature>
<feature type="binding site" description="in other chain" evidence="1">
    <location>
        <position position="99"/>
    </location>
    <ligand>
        <name>L-methionine</name>
        <dbReference type="ChEBI" id="CHEBI:57844"/>
        <note>ligand shared between two neighboring subunits</note>
    </ligand>
</feature>
<feature type="binding site" description="in other chain" evidence="1">
    <location>
        <begin position="164"/>
        <end position="166"/>
    </location>
    <ligand>
        <name>ATP</name>
        <dbReference type="ChEBI" id="CHEBI:30616"/>
        <note>ligand shared between two neighboring subunits</note>
    </ligand>
</feature>
<feature type="binding site" description="in other chain" evidence="1">
    <location>
        <begin position="230"/>
        <end position="231"/>
    </location>
    <ligand>
        <name>ATP</name>
        <dbReference type="ChEBI" id="CHEBI:30616"/>
        <note>ligand shared between two neighboring subunits</note>
    </ligand>
</feature>
<feature type="binding site" evidence="1">
    <location>
        <position position="239"/>
    </location>
    <ligand>
        <name>ATP</name>
        <dbReference type="ChEBI" id="CHEBI:30616"/>
        <note>ligand shared between two neighboring subunits</note>
    </ligand>
</feature>
<feature type="binding site" evidence="1">
    <location>
        <position position="239"/>
    </location>
    <ligand>
        <name>L-methionine</name>
        <dbReference type="ChEBI" id="CHEBI:57844"/>
        <note>ligand shared between two neighboring subunits</note>
    </ligand>
</feature>
<feature type="binding site" description="in other chain" evidence="1">
    <location>
        <begin position="245"/>
        <end position="246"/>
    </location>
    <ligand>
        <name>ATP</name>
        <dbReference type="ChEBI" id="CHEBI:30616"/>
        <note>ligand shared between two neighboring subunits</note>
    </ligand>
</feature>
<feature type="binding site" evidence="1">
    <location>
        <position position="262"/>
    </location>
    <ligand>
        <name>ATP</name>
        <dbReference type="ChEBI" id="CHEBI:30616"/>
        <note>ligand shared between two neighboring subunits</note>
    </ligand>
</feature>
<feature type="binding site" evidence="1">
    <location>
        <position position="266"/>
    </location>
    <ligand>
        <name>ATP</name>
        <dbReference type="ChEBI" id="CHEBI:30616"/>
        <note>ligand shared between two neighboring subunits</note>
    </ligand>
</feature>
<feature type="binding site" description="in other chain" evidence="1">
    <location>
        <position position="270"/>
    </location>
    <ligand>
        <name>L-methionine</name>
        <dbReference type="ChEBI" id="CHEBI:57844"/>
        <note>ligand shared between two neighboring subunits</note>
    </ligand>
</feature>
<reference key="1">
    <citation type="journal article" date="2004" name="Proc. Natl. Acad. Sci. U.S.A.">
        <title>Insights into the evolution of Yersinia pestis through whole-genome comparison with Yersinia pseudotuberculosis.</title>
        <authorList>
            <person name="Chain P.S.G."/>
            <person name="Carniel E."/>
            <person name="Larimer F.W."/>
            <person name="Lamerdin J."/>
            <person name="Stoutland P.O."/>
            <person name="Regala W.M."/>
            <person name="Georgescu A.M."/>
            <person name="Vergez L.M."/>
            <person name="Land M.L."/>
            <person name="Motin V.L."/>
            <person name="Brubaker R.R."/>
            <person name="Fowler J."/>
            <person name="Hinnebusch J."/>
            <person name="Marceau M."/>
            <person name="Medigue C."/>
            <person name="Simonet M."/>
            <person name="Chenal-Francisque V."/>
            <person name="Souza B."/>
            <person name="Dacheux D."/>
            <person name="Elliott J.M."/>
            <person name="Derbise A."/>
            <person name="Hauser L.J."/>
            <person name="Garcia E."/>
        </authorList>
    </citation>
    <scope>NUCLEOTIDE SEQUENCE [LARGE SCALE GENOMIC DNA]</scope>
    <source>
        <strain>IP32953</strain>
    </source>
</reference>
<protein>
    <recommendedName>
        <fullName evidence="1">S-adenosylmethionine synthase</fullName>
        <shortName evidence="1">AdoMet synthase</shortName>
        <ecNumber evidence="1">2.5.1.6</ecNumber>
    </recommendedName>
    <alternativeName>
        <fullName evidence="1">MAT</fullName>
    </alternativeName>
    <alternativeName>
        <fullName evidence="1">Methionine adenosyltransferase</fullName>
    </alternativeName>
</protein>
<organism>
    <name type="scientific">Yersinia pseudotuberculosis serotype I (strain IP32953)</name>
    <dbReference type="NCBI Taxonomy" id="273123"/>
    <lineage>
        <taxon>Bacteria</taxon>
        <taxon>Pseudomonadati</taxon>
        <taxon>Pseudomonadota</taxon>
        <taxon>Gammaproteobacteria</taxon>
        <taxon>Enterobacterales</taxon>
        <taxon>Yersiniaceae</taxon>
        <taxon>Yersinia</taxon>
    </lineage>
</organism>
<name>METK_YERPS</name>
<dbReference type="EC" id="2.5.1.6" evidence="1"/>
<dbReference type="EMBL" id="BX936398">
    <property type="protein sequence ID" value="CAH22441.1"/>
    <property type="molecule type" value="Genomic_DNA"/>
</dbReference>
<dbReference type="RefSeq" id="WP_002209971.1">
    <property type="nucleotide sequence ID" value="NZ_CP009712.1"/>
</dbReference>
<dbReference type="SMR" id="Q666P5"/>
<dbReference type="GeneID" id="57973710"/>
<dbReference type="KEGG" id="ypo:BZ17_3407"/>
<dbReference type="KEGG" id="yps:YPTB3203"/>
<dbReference type="PATRIC" id="fig|273123.14.peg.3575"/>
<dbReference type="UniPathway" id="UPA00315">
    <property type="reaction ID" value="UER00080"/>
</dbReference>
<dbReference type="Proteomes" id="UP000001011">
    <property type="component" value="Chromosome"/>
</dbReference>
<dbReference type="GO" id="GO:0005737">
    <property type="term" value="C:cytoplasm"/>
    <property type="evidence" value="ECO:0007669"/>
    <property type="project" value="UniProtKB-SubCell"/>
</dbReference>
<dbReference type="GO" id="GO:0005524">
    <property type="term" value="F:ATP binding"/>
    <property type="evidence" value="ECO:0007669"/>
    <property type="project" value="UniProtKB-UniRule"/>
</dbReference>
<dbReference type="GO" id="GO:0000287">
    <property type="term" value="F:magnesium ion binding"/>
    <property type="evidence" value="ECO:0007669"/>
    <property type="project" value="UniProtKB-UniRule"/>
</dbReference>
<dbReference type="GO" id="GO:0004478">
    <property type="term" value="F:methionine adenosyltransferase activity"/>
    <property type="evidence" value="ECO:0007669"/>
    <property type="project" value="UniProtKB-UniRule"/>
</dbReference>
<dbReference type="GO" id="GO:0006730">
    <property type="term" value="P:one-carbon metabolic process"/>
    <property type="evidence" value="ECO:0007669"/>
    <property type="project" value="UniProtKB-KW"/>
</dbReference>
<dbReference type="GO" id="GO:0006556">
    <property type="term" value="P:S-adenosylmethionine biosynthetic process"/>
    <property type="evidence" value="ECO:0007669"/>
    <property type="project" value="UniProtKB-UniRule"/>
</dbReference>
<dbReference type="CDD" id="cd18079">
    <property type="entry name" value="S-AdoMet_synt"/>
    <property type="match status" value="1"/>
</dbReference>
<dbReference type="FunFam" id="3.30.300.10:FF:000001">
    <property type="entry name" value="S-adenosylmethionine synthase"/>
    <property type="match status" value="1"/>
</dbReference>
<dbReference type="FunFam" id="3.30.300.10:FF:000003">
    <property type="entry name" value="S-adenosylmethionine synthase"/>
    <property type="match status" value="1"/>
</dbReference>
<dbReference type="Gene3D" id="3.30.300.10">
    <property type="match status" value="3"/>
</dbReference>
<dbReference type="HAMAP" id="MF_00086">
    <property type="entry name" value="S_AdoMet_synth1"/>
    <property type="match status" value="1"/>
</dbReference>
<dbReference type="InterPro" id="IPR022631">
    <property type="entry name" value="ADOMET_SYNTHASE_CS"/>
</dbReference>
<dbReference type="InterPro" id="IPR022630">
    <property type="entry name" value="S-AdoMet_synt_C"/>
</dbReference>
<dbReference type="InterPro" id="IPR022629">
    <property type="entry name" value="S-AdoMet_synt_central"/>
</dbReference>
<dbReference type="InterPro" id="IPR022628">
    <property type="entry name" value="S-AdoMet_synt_N"/>
</dbReference>
<dbReference type="InterPro" id="IPR002133">
    <property type="entry name" value="S-AdoMet_synthetase"/>
</dbReference>
<dbReference type="InterPro" id="IPR022636">
    <property type="entry name" value="S-AdoMet_synthetase_sfam"/>
</dbReference>
<dbReference type="NCBIfam" id="TIGR01034">
    <property type="entry name" value="metK"/>
    <property type="match status" value="1"/>
</dbReference>
<dbReference type="PANTHER" id="PTHR11964">
    <property type="entry name" value="S-ADENOSYLMETHIONINE SYNTHETASE"/>
    <property type="match status" value="1"/>
</dbReference>
<dbReference type="Pfam" id="PF02773">
    <property type="entry name" value="S-AdoMet_synt_C"/>
    <property type="match status" value="1"/>
</dbReference>
<dbReference type="Pfam" id="PF02772">
    <property type="entry name" value="S-AdoMet_synt_M"/>
    <property type="match status" value="1"/>
</dbReference>
<dbReference type="Pfam" id="PF00438">
    <property type="entry name" value="S-AdoMet_synt_N"/>
    <property type="match status" value="1"/>
</dbReference>
<dbReference type="PIRSF" id="PIRSF000497">
    <property type="entry name" value="MAT"/>
    <property type="match status" value="1"/>
</dbReference>
<dbReference type="SUPFAM" id="SSF55973">
    <property type="entry name" value="S-adenosylmethionine synthetase"/>
    <property type="match status" value="3"/>
</dbReference>
<dbReference type="PROSITE" id="PS00376">
    <property type="entry name" value="ADOMET_SYNTHASE_1"/>
    <property type="match status" value="1"/>
</dbReference>
<dbReference type="PROSITE" id="PS00377">
    <property type="entry name" value="ADOMET_SYNTHASE_2"/>
    <property type="match status" value="1"/>
</dbReference>